<evidence type="ECO:0000255" key="1">
    <source>
        <dbReference type="HAMAP-Rule" id="MF_00075"/>
    </source>
</evidence>
<reference key="1">
    <citation type="journal article" date="2009" name="BMC Genomics">
        <title>Metabolic analysis of the soil microbe Dechloromonas aromatica str. RCB: indications of a surprisingly complex life-style and cryptic anaerobic pathways for aromatic degradation.</title>
        <authorList>
            <person name="Salinero K.K."/>
            <person name="Keller K."/>
            <person name="Feil W.S."/>
            <person name="Feil H."/>
            <person name="Trong S."/>
            <person name="Di Bartolo G."/>
            <person name="Lapidus A."/>
        </authorList>
    </citation>
    <scope>NUCLEOTIDE SEQUENCE [LARGE SCALE GENOMIC DNA]</scope>
    <source>
        <strain>RCB</strain>
    </source>
</reference>
<keyword id="KW-0963">Cytoplasm</keyword>
<keyword id="KW-0396">Initiation factor</keyword>
<keyword id="KW-0648">Protein biosynthesis</keyword>
<keyword id="KW-0694">RNA-binding</keyword>
<keyword id="KW-0699">rRNA-binding</keyword>
<gene>
    <name evidence="1" type="primary">infA2</name>
    <name type="ordered locus">Daro_0509</name>
</gene>
<organism>
    <name type="scientific">Dechloromonas aromatica (strain RCB)</name>
    <dbReference type="NCBI Taxonomy" id="159087"/>
    <lineage>
        <taxon>Bacteria</taxon>
        <taxon>Pseudomonadati</taxon>
        <taxon>Pseudomonadota</taxon>
        <taxon>Betaproteobacteria</taxon>
        <taxon>Rhodocyclales</taxon>
        <taxon>Azonexaceae</taxon>
        <taxon>Dechloromonas</taxon>
    </lineage>
</organism>
<sequence>MAKEELLEMQGVVNDVLPDTRFRVTLENGHELIAYTSGKMKKNHIRILVGDKVTLELSPYDLSKGRITFRHIENRGTPNPQAQRRRY</sequence>
<dbReference type="EMBL" id="CP000089">
    <property type="protein sequence ID" value="AAZ45266.1"/>
    <property type="molecule type" value="Genomic_DNA"/>
</dbReference>
<dbReference type="SMR" id="Q47IR5"/>
<dbReference type="STRING" id="159087.Daro_0509"/>
<dbReference type="KEGG" id="dar:Daro_0509"/>
<dbReference type="eggNOG" id="COG0361">
    <property type="taxonomic scope" value="Bacteria"/>
</dbReference>
<dbReference type="HOGENOM" id="CLU_151267_4_1_4"/>
<dbReference type="OrthoDB" id="9803250at2"/>
<dbReference type="GO" id="GO:0005829">
    <property type="term" value="C:cytosol"/>
    <property type="evidence" value="ECO:0007669"/>
    <property type="project" value="TreeGrafter"/>
</dbReference>
<dbReference type="GO" id="GO:0043022">
    <property type="term" value="F:ribosome binding"/>
    <property type="evidence" value="ECO:0007669"/>
    <property type="project" value="UniProtKB-UniRule"/>
</dbReference>
<dbReference type="GO" id="GO:0019843">
    <property type="term" value="F:rRNA binding"/>
    <property type="evidence" value="ECO:0007669"/>
    <property type="project" value="UniProtKB-UniRule"/>
</dbReference>
<dbReference type="GO" id="GO:0003743">
    <property type="term" value="F:translation initiation factor activity"/>
    <property type="evidence" value="ECO:0007669"/>
    <property type="project" value="UniProtKB-UniRule"/>
</dbReference>
<dbReference type="CDD" id="cd04451">
    <property type="entry name" value="S1_IF1"/>
    <property type="match status" value="1"/>
</dbReference>
<dbReference type="FunFam" id="2.40.50.140:FF:000002">
    <property type="entry name" value="Translation initiation factor IF-1"/>
    <property type="match status" value="1"/>
</dbReference>
<dbReference type="Gene3D" id="2.40.50.140">
    <property type="entry name" value="Nucleic acid-binding proteins"/>
    <property type="match status" value="1"/>
</dbReference>
<dbReference type="HAMAP" id="MF_00075">
    <property type="entry name" value="IF_1"/>
    <property type="match status" value="1"/>
</dbReference>
<dbReference type="InterPro" id="IPR012340">
    <property type="entry name" value="NA-bd_OB-fold"/>
</dbReference>
<dbReference type="InterPro" id="IPR006196">
    <property type="entry name" value="RNA-binding_domain_S1_IF1"/>
</dbReference>
<dbReference type="InterPro" id="IPR004368">
    <property type="entry name" value="TIF_IF1"/>
</dbReference>
<dbReference type="NCBIfam" id="TIGR00008">
    <property type="entry name" value="infA"/>
    <property type="match status" value="1"/>
</dbReference>
<dbReference type="PANTHER" id="PTHR33370">
    <property type="entry name" value="TRANSLATION INITIATION FACTOR IF-1, CHLOROPLASTIC"/>
    <property type="match status" value="1"/>
</dbReference>
<dbReference type="PANTHER" id="PTHR33370:SF1">
    <property type="entry name" value="TRANSLATION INITIATION FACTOR IF-1, CHLOROPLASTIC"/>
    <property type="match status" value="1"/>
</dbReference>
<dbReference type="Pfam" id="PF01176">
    <property type="entry name" value="eIF-1a"/>
    <property type="match status" value="1"/>
</dbReference>
<dbReference type="SUPFAM" id="SSF50249">
    <property type="entry name" value="Nucleic acid-binding proteins"/>
    <property type="match status" value="1"/>
</dbReference>
<dbReference type="PROSITE" id="PS50832">
    <property type="entry name" value="S1_IF1_TYPE"/>
    <property type="match status" value="1"/>
</dbReference>
<protein>
    <recommendedName>
        <fullName evidence="1">Translation initiation factor IF-1 2</fullName>
    </recommendedName>
</protein>
<name>IF12_DECAR</name>
<accession>Q47IR5</accession>
<proteinExistence type="inferred from homology"/>
<comment type="function">
    <text evidence="1">One of the essential components for the initiation of protein synthesis. Stabilizes the binding of IF-2 and IF-3 on the 30S subunit to which N-formylmethionyl-tRNA(fMet) subsequently binds. Helps modulate mRNA selection, yielding the 30S pre-initiation complex (PIC). Upon addition of the 50S ribosomal subunit IF-1, IF-2 and IF-3 are released leaving the mature 70S translation initiation complex.</text>
</comment>
<comment type="subunit">
    <text evidence="1">Component of the 30S ribosomal translation pre-initiation complex which assembles on the 30S ribosome in the order IF-2 and IF-3, IF-1 and N-formylmethionyl-tRNA(fMet); mRNA recruitment can occur at any time during PIC assembly.</text>
</comment>
<comment type="subcellular location">
    <subcellularLocation>
        <location evidence="1">Cytoplasm</location>
    </subcellularLocation>
</comment>
<comment type="similarity">
    <text evidence="1">Belongs to the IF-1 family.</text>
</comment>
<feature type="chain" id="PRO_0000263792" description="Translation initiation factor IF-1 2">
    <location>
        <begin position="1"/>
        <end position="87"/>
    </location>
</feature>
<feature type="domain" description="S1-like" evidence="1">
    <location>
        <begin position="1"/>
        <end position="72"/>
    </location>
</feature>